<name>UGE5_ARATH</name>
<accession>Q9SN58</accession>
<accession>O81619</accession>
<accession>Q8LEA9</accession>
<accession>Q8VZ26</accession>
<dbReference type="EC" id="5.1.3.2" evidence="3 5"/>
<dbReference type="EMBL" id="AF080118">
    <property type="protein sequence ID" value="AAC33955.1"/>
    <property type="status" value="ALT_INIT"/>
    <property type="molecule type" value="Genomic_DNA"/>
</dbReference>
<dbReference type="EMBL" id="AL049525">
    <property type="protein sequence ID" value="CAB40064.1"/>
    <property type="molecule type" value="Genomic_DNA"/>
</dbReference>
<dbReference type="EMBL" id="AL161518">
    <property type="protein sequence ID" value="CAB81197.1"/>
    <property type="molecule type" value="Genomic_DNA"/>
</dbReference>
<dbReference type="EMBL" id="CP002687">
    <property type="protein sequence ID" value="AEE82951.1"/>
    <property type="molecule type" value="Genomic_DNA"/>
</dbReference>
<dbReference type="EMBL" id="AY065354">
    <property type="protein sequence ID" value="AAL38795.1"/>
    <property type="molecule type" value="mRNA"/>
</dbReference>
<dbReference type="EMBL" id="AY117180">
    <property type="protein sequence ID" value="AAM51255.1"/>
    <property type="molecule type" value="mRNA"/>
</dbReference>
<dbReference type="EMBL" id="AY140073">
    <property type="protein sequence ID" value="AAM98214.1"/>
    <property type="molecule type" value="mRNA"/>
</dbReference>
<dbReference type="EMBL" id="AY085528">
    <property type="protein sequence ID" value="AAM62752.1"/>
    <property type="status" value="ALT_INIT"/>
    <property type="molecule type" value="mRNA"/>
</dbReference>
<dbReference type="PIR" id="T01881">
    <property type="entry name" value="T01881"/>
</dbReference>
<dbReference type="PIR" id="T04291">
    <property type="entry name" value="T04291"/>
</dbReference>
<dbReference type="RefSeq" id="NP_192834.1">
    <property type="nucleotide sequence ID" value="NM_117166.3"/>
</dbReference>
<dbReference type="SMR" id="Q9SN58"/>
<dbReference type="BioGRID" id="11995">
    <property type="interactions" value="1"/>
</dbReference>
<dbReference type="FunCoup" id="Q9SN58">
    <property type="interactions" value="792"/>
</dbReference>
<dbReference type="IntAct" id="Q9SN58">
    <property type="interactions" value="1"/>
</dbReference>
<dbReference type="STRING" id="3702.Q9SN58"/>
<dbReference type="iPTMnet" id="Q9SN58"/>
<dbReference type="PaxDb" id="3702-AT4G10960.1"/>
<dbReference type="ProteomicsDB" id="245262"/>
<dbReference type="EnsemblPlants" id="AT4G10960.1">
    <property type="protein sequence ID" value="AT4G10960.1"/>
    <property type="gene ID" value="AT4G10960"/>
</dbReference>
<dbReference type="GeneID" id="826696"/>
<dbReference type="Gramene" id="AT4G10960.1">
    <property type="protein sequence ID" value="AT4G10960.1"/>
    <property type="gene ID" value="AT4G10960"/>
</dbReference>
<dbReference type="KEGG" id="ath:AT4G10960"/>
<dbReference type="Araport" id="AT4G10960"/>
<dbReference type="TAIR" id="AT4G10960">
    <property type="gene designation" value="UGE5"/>
</dbReference>
<dbReference type="eggNOG" id="KOG1371">
    <property type="taxonomic scope" value="Eukaryota"/>
</dbReference>
<dbReference type="HOGENOM" id="CLU_007383_1_10_1"/>
<dbReference type="InParanoid" id="Q9SN58"/>
<dbReference type="OMA" id="RDYDTPD"/>
<dbReference type="PhylomeDB" id="Q9SN58"/>
<dbReference type="BRENDA" id="5.1.3.2">
    <property type="organism ID" value="399"/>
</dbReference>
<dbReference type="BRENDA" id="5.1.3.5">
    <property type="organism ID" value="399"/>
</dbReference>
<dbReference type="SABIO-RK" id="Q9SN58"/>
<dbReference type="UniPathway" id="UPA00214"/>
<dbReference type="PRO" id="PR:Q9SN58"/>
<dbReference type="Proteomes" id="UP000006548">
    <property type="component" value="Chromosome 4"/>
</dbReference>
<dbReference type="ExpressionAtlas" id="Q9SN58">
    <property type="expression patterns" value="baseline and differential"/>
</dbReference>
<dbReference type="GO" id="GO:0003978">
    <property type="term" value="F:UDP-glucose 4-epimerase activity"/>
    <property type="evidence" value="ECO:0000314"/>
    <property type="project" value="TAIR"/>
</dbReference>
<dbReference type="GO" id="GO:0006012">
    <property type="term" value="P:galactose metabolic process"/>
    <property type="evidence" value="ECO:0007669"/>
    <property type="project" value="UniProtKB-UniPathway"/>
</dbReference>
<dbReference type="CDD" id="cd05247">
    <property type="entry name" value="UDP_G4E_1_SDR_e"/>
    <property type="match status" value="1"/>
</dbReference>
<dbReference type="FunFam" id="3.40.50.720:FF:000040">
    <property type="entry name" value="UDP-glucose 4-epimerase"/>
    <property type="match status" value="1"/>
</dbReference>
<dbReference type="FunFam" id="3.90.25.10:FF:000060">
    <property type="entry name" value="UDP-glucose 4-epimerase 4"/>
    <property type="match status" value="1"/>
</dbReference>
<dbReference type="Gene3D" id="3.40.50.720">
    <property type="entry name" value="NAD(P)-binding Rossmann-like Domain"/>
    <property type="match status" value="1"/>
</dbReference>
<dbReference type="Gene3D" id="3.90.25.10">
    <property type="entry name" value="UDP-galactose 4-epimerase, domain 1"/>
    <property type="match status" value="1"/>
</dbReference>
<dbReference type="InterPro" id="IPR016040">
    <property type="entry name" value="NAD(P)-bd_dom"/>
</dbReference>
<dbReference type="InterPro" id="IPR036291">
    <property type="entry name" value="NAD(P)-bd_dom_sf"/>
</dbReference>
<dbReference type="InterPro" id="IPR005886">
    <property type="entry name" value="UDP_G4E"/>
</dbReference>
<dbReference type="NCBIfam" id="TIGR01179">
    <property type="entry name" value="galE"/>
    <property type="match status" value="1"/>
</dbReference>
<dbReference type="NCBIfam" id="NF007956">
    <property type="entry name" value="PRK10675.1"/>
    <property type="match status" value="1"/>
</dbReference>
<dbReference type="PANTHER" id="PTHR43725">
    <property type="entry name" value="UDP-GLUCOSE 4-EPIMERASE"/>
    <property type="match status" value="1"/>
</dbReference>
<dbReference type="PANTHER" id="PTHR43725:SF47">
    <property type="entry name" value="UDP-GLUCOSE 4-EPIMERASE"/>
    <property type="match status" value="1"/>
</dbReference>
<dbReference type="Pfam" id="PF16363">
    <property type="entry name" value="GDP_Man_Dehyd"/>
    <property type="match status" value="1"/>
</dbReference>
<dbReference type="PRINTS" id="PR01713">
    <property type="entry name" value="NUCEPIMERASE"/>
</dbReference>
<dbReference type="SUPFAM" id="SSF51735">
    <property type="entry name" value="NAD(P)-binding Rossmann-fold domains"/>
    <property type="match status" value="1"/>
</dbReference>
<proteinExistence type="evidence at protein level"/>
<sequence>MMARNVLVSGGAGYIGSHTVLQLLLGGYSVVVVDNLDNSSAVSLQRVKKLAAEHGERLSFHQVDLRDRSALEKIFSETKFDAVIHFAGLKAVGESVEKPLLYYNNNLVGTITLLEVMAQHGCKNLVFSSSATVYGSPKEVPCTEEFPISALNPYGRTKLFIEEICRDVYGSDPEWKIILLRYFNPVGAHPSGDIGEDPRGIPNNLMPFVQQVAVGRRPHLTVFGNDYNTKDGTGVRDYIHVIDLADGHIAALRKLEDCKIGCEVYNLGTGNGTSVLEMVDAFEKASGKKIPLVIAGRRPGDAEVVYASTERAESELNWKAKYGIEEMCRDLWNWASNNPYGYDSSSEDNSH</sequence>
<evidence type="ECO:0000250" key="1">
    <source>
        <dbReference type="UniProtKB" id="Q14376"/>
    </source>
</evidence>
<evidence type="ECO:0000269" key="2">
    <source>
    </source>
</evidence>
<evidence type="ECO:0000269" key="3">
    <source>
    </source>
</evidence>
<evidence type="ECO:0000269" key="4">
    <source>
    </source>
</evidence>
<evidence type="ECO:0000269" key="5">
    <source>
    </source>
</evidence>
<evidence type="ECO:0000303" key="6">
    <source>
    </source>
</evidence>
<evidence type="ECO:0000303" key="7">
    <source>
    </source>
</evidence>
<evidence type="ECO:0000305" key="8"/>
<evidence type="ECO:0000312" key="9">
    <source>
        <dbReference type="Araport" id="AT4G10960"/>
    </source>
</evidence>
<evidence type="ECO:0000312" key="10">
    <source>
        <dbReference type="EMBL" id="AAC33955.1"/>
    </source>
</evidence>
<evidence type="ECO:0000312" key="11">
    <source>
        <dbReference type="EMBL" id="CAB40064.1"/>
    </source>
</evidence>
<comment type="function">
    <text evidence="3 5">Catalyzes the interconversion between UDP-glucose and UDP-galactose.</text>
</comment>
<comment type="catalytic activity">
    <reaction evidence="3 5">
        <text>UDP-alpha-D-glucose = UDP-alpha-D-galactose</text>
        <dbReference type="Rhea" id="RHEA:22168"/>
        <dbReference type="ChEBI" id="CHEBI:58885"/>
        <dbReference type="ChEBI" id="CHEBI:66914"/>
        <dbReference type="EC" id="5.1.3.2"/>
    </reaction>
</comment>
<comment type="cofactor">
    <cofactor evidence="3 5">
        <name>NAD(+)</name>
        <dbReference type="ChEBI" id="CHEBI:57540"/>
    </cofactor>
</comment>
<comment type="activity regulation">
    <text evidence="3">Enhanced activity by NaCl. Inhibited by UDP.</text>
</comment>
<comment type="biophysicochemical properties">
    <kinetics>
        <KM evidence="3">0.13 mM for UDP-glucose</KM>
        <KM evidence="3">0.17 mM for UDP-galactose</KM>
        <KM evidence="5">0.15 mM for UDP-galactose</KM>
        <KM evidence="5">0.16 mM for UDP-xylose</KM>
    </kinetics>
    <phDependence>
        <text evidence="3">Optimum pH is 7.0-9.0.</text>
    </phDependence>
    <temperatureDependence>
        <text evidence="3">Optimum temperature is 35 degrees Celsius.</text>
    </temperatureDependence>
</comment>
<comment type="pathway">
    <text evidence="8">Carbohydrate metabolism; galactose metabolism.</text>
</comment>
<comment type="subunit">
    <text evidence="3">Forms homodimers and heterodimers.</text>
</comment>
<comment type="tissue specificity">
    <text evidence="2 3 4">Widely expressed.</text>
</comment>
<comment type="disruption phenotype">
    <text evidence="4">No visible phenotype under normal growth conditions.</text>
</comment>
<comment type="similarity">
    <text evidence="8">Belongs to the NAD(P)-dependent epimerase/dehydratase family.</text>
</comment>
<comment type="sequence caution" evidence="8">
    <conflict type="erroneous initiation">
        <sequence resource="EMBL-CDS" id="AAC33955"/>
    </conflict>
    <text>Truncated N-terminus.</text>
</comment>
<comment type="sequence caution" evidence="8">
    <conflict type="erroneous initiation">
        <sequence resource="EMBL-CDS" id="AAM62752"/>
    </conflict>
    <text>Truncated N-terminus.</text>
</comment>
<reference key="1">
    <citation type="journal article" date="1999" name="Nature">
        <title>Sequence and analysis of chromosome 4 of the plant Arabidopsis thaliana.</title>
        <authorList>
            <person name="Mayer K.F.X."/>
            <person name="Schueller C."/>
            <person name="Wambutt R."/>
            <person name="Murphy G."/>
            <person name="Volckaert G."/>
            <person name="Pohl T."/>
            <person name="Duesterhoeft A."/>
            <person name="Stiekema W."/>
            <person name="Entian K.-D."/>
            <person name="Terryn N."/>
            <person name="Harris B."/>
            <person name="Ansorge W."/>
            <person name="Brandt P."/>
            <person name="Grivell L.A."/>
            <person name="Rieger M."/>
            <person name="Weichselgartner M."/>
            <person name="de Simone V."/>
            <person name="Obermaier B."/>
            <person name="Mache R."/>
            <person name="Mueller M."/>
            <person name="Kreis M."/>
            <person name="Delseny M."/>
            <person name="Puigdomenech P."/>
            <person name="Watson M."/>
            <person name="Schmidtheini T."/>
            <person name="Reichert B."/>
            <person name="Portetelle D."/>
            <person name="Perez-Alonso M."/>
            <person name="Boutry M."/>
            <person name="Bancroft I."/>
            <person name="Vos P."/>
            <person name="Hoheisel J."/>
            <person name="Zimmermann W."/>
            <person name="Wedler H."/>
            <person name="Ridley P."/>
            <person name="Langham S.-A."/>
            <person name="McCullagh B."/>
            <person name="Bilham L."/>
            <person name="Robben J."/>
            <person name="van der Schueren J."/>
            <person name="Grymonprez B."/>
            <person name="Chuang Y.-J."/>
            <person name="Vandenbussche F."/>
            <person name="Braeken M."/>
            <person name="Weltjens I."/>
            <person name="Voet M."/>
            <person name="Bastiaens I."/>
            <person name="Aert R."/>
            <person name="Defoor E."/>
            <person name="Weitzenegger T."/>
            <person name="Bothe G."/>
            <person name="Ramsperger U."/>
            <person name="Hilbert H."/>
            <person name="Braun M."/>
            <person name="Holzer E."/>
            <person name="Brandt A."/>
            <person name="Peters S."/>
            <person name="van Staveren M."/>
            <person name="Dirkse W."/>
            <person name="Mooijman P."/>
            <person name="Klein Lankhorst R."/>
            <person name="Rose M."/>
            <person name="Hauf J."/>
            <person name="Koetter P."/>
            <person name="Berneiser S."/>
            <person name="Hempel S."/>
            <person name="Feldpausch M."/>
            <person name="Lamberth S."/>
            <person name="Van den Daele H."/>
            <person name="De Keyser A."/>
            <person name="Buysshaert C."/>
            <person name="Gielen J."/>
            <person name="Villarroel R."/>
            <person name="De Clercq R."/>
            <person name="van Montagu M."/>
            <person name="Rogers J."/>
            <person name="Cronin A."/>
            <person name="Quail M.A."/>
            <person name="Bray-Allen S."/>
            <person name="Clark L."/>
            <person name="Doggett J."/>
            <person name="Hall S."/>
            <person name="Kay M."/>
            <person name="Lennard N."/>
            <person name="McLay K."/>
            <person name="Mayes R."/>
            <person name="Pettett A."/>
            <person name="Rajandream M.A."/>
            <person name="Lyne M."/>
            <person name="Benes V."/>
            <person name="Rechmann S."/>
            <person name="Borkova D."/>
            <person name="Bloecker H."/>
            <person name="Scharfe M."/>
            <person name="Grimm M."/>
            <person name="Loehnert T.-H."/>
            <person name="Dose S."/>
            <person name="de Haan M."/>
            <person name="Maarse A.C."/>
            <person name="Schaefer M."/>
            <person name="Mueller-Auer S."/>
            <person name="Gabel C."/>
            <person name="Fuchs M."/>
            <person name="Fartmann B."/>
            <person name="Granderath K."/>
            <person name="Dauner D."/>
            <person name="Herzl A."/>
            <person name="Neumann S."/>
            <person name="Argiriou A."/>
            <person name="Vitale D."/>
            <person name="Liguori R."/>
            <person name="Piravandi E."/>
            <person name="Massenet O."/>
            <person name="Quigley F."/>
            <person name="Clabauld G."/>
            <person name="Muendlein A."/>
            <person name="Felber R."/>
            <person name="Schnabl S."/>
            <person name="Hiller R."/>
            <person name="Schmidt W."/>
            <person name="Lecharny A."/>
            <person name="Aubourg S."/>
            <person name="Chefdor F."/>
            <person name="Cooke R."/>
            <person name="Berger C."/>
            <person name="Monfort A."/>
            <person name="Casacuberta E."/>
            <person name="Gibbons T."/>
            <person name="Weber N."/>
            <person name="Vandenbol M."/>
            <person name="Bargues M."/>
            <person name="Terol J."/>
            <person name="Torres A."/>
            <person name="Perez-Perez A."/>
            <person name="Purnelle B."/>
            <person name="Bent E."/>
            <person name="Johnson S."/>
            <person name="Tacon D."/>
            <person name="Jesse T."/>
            <person name="Heijnen L."/>
            <person name="Schwarz S."/>
            <person name="Scholler P."/>
            <person name="Heber S."/>
            <person name="Francs P."/>
            <person name="Bielke C."/>
            <person name="Frishman D."/>
            <person name="Haase D."/>
            <person name="Lemcke K."/>
            <person name="Mewes H.-W."/>
            <person name="Stocker S."/>
            <person name="Zaccaria P."/>
            <person name="Bevan M."/>
            <person name="Wilson R.K."/>
            <person name="de la Bastide M."/>
            <person name="Habermann K."/>
            <person name="Parnell L."/>
            <person name="Dedhia N."/>
            <person name="Gnoj L."/>
            <person name="Schutz K."/>
            <person name="Huang E."/>
            <person name="Spiegel L."/>
            <person name="Sekhon M."/>
            <person name="Murray J."/>
            <person name="Sheet P."/>
            <person name="Cordes M."/>
            <person name="Abu-Threideh J."/>
            <person name="Stoneking T."/>
            <person name="Kalicki J."/>
            <person name="Graves T."/>
            <person name="Harmon G."/>
            <person name="Edwards J."/>
            <person name="Latreille P."/>
            <person name="Courtney L."/>
            <person name="Cloud J."/>
            <person name="Abbott A."/>
            <person name="Scott K."/>
            <person name="Johnson D."/>
            <person name="Minx P."/>
            <person name="Bentley D."/>
            <person name="Fulton B."/>
            <person name="Miller N."/>
            <person name="Greco T."/>
            <person name="Kemp K."/>
            <person name="Kramer J."/>
            <person name="Fulton L."/>
            <person name="Mardis E."/>
            <person name="Dante M."/>
            <person name="Pepin K."/>
            <person name="Hillier L.W."/>
            <person name="Nelson J."/>
            <person name="Spieth J."/>
            <person name="Ryan E."/>
            <person name="Andrews S."/>
            <person name="Geisel C."/>
            <person name="Layman D."/>
            <person name="Du H."/>
            <person name="Ali J."/>
            <person name="Berghoff A."/>
            <person name="Jones K."/>
            <person name="Drone K."/>
            <person name="Cotton M."/>
            <person name="Joshu C."/>
            <person name="Antonoiu B."/>
            <person name="Zidanic M."/>
            <person name="Strong C."/>
            <person name="Sun H."/>
            <person name="Lamar B."/>
            <person name="Yordan C."/>
            <person name="Ma P."/>
            <person name="Zhong J."/>
            <person name="Preston R."/>
            <person name="Vil D."/>
            <person name="Shekher M."/>
            <person name="Matero A."/>
            <person name="Shah R."/>
            <person name="Swaby I.K."/>
            <person name="O'Shaughnessy A."/>
            <person name="Rodriguez M."/>
            <person name="Hoffman J."/>
            <person name="Till S."/>
            <person name="Granat S."/>
            <person name="Shohdy N."/>
            <person name="Hasegawa A."/>
            <person name="Hameed A."/>
            <person name="Lodhi M."/>
            <person name="Johnson A."/>
            <person name="Chen E."/>
            <person name="Marra M.A."/>
            <person name="Martienssen R."/>
            <person name="McCombie W.R."/>
        </authorList>
    </citation>
    <scope>NUCLEOTIDE SEQUENCE [LARGE SCALE GENOMIC DNA]</scope>
    <source>
        <strain>cv. Columbia</strain>
    </source>
</reference>
<reference key="2">
    <citation type="journal article" date="2017" name="Plant J.">
        <title>Araport11: a complete reannotation of the Arabidopsis thaliana reference genome.</title>
        <authorList>
            <person name="Cheng C.Y."/>
            <person name="Krishnakumar V."/>
            <person name="Chan A.P."/>
            <person name="Thibaud-Nissen F."/>
            <person name="Schobel S."/>
            <person name="Town C.D."/>
        </authorList>
    </citation>
    <scope>GENOME REANNOTATION</scope>
    <source>
        <strain>cv. Columbia</strain>
    </source>
</reference>
<reference key="3">
    <citation type="journal article" date="2003" name="Science">
        <title>Empirical analysis of transcriptional activity in the Arabidopsis genome.</title>
        <authorList>
            <person name="Yamada K."/>
            <person name="Lim J."/>
            <person name="Dale J.M."/>
            <person name="Chen H."/>
            <person name="Shinn P."/>
            <person name="Palm C.J."/>
            <person name="Southwick A.M."/>
            <person name="Wu H.C."/>
            <person name="Kim C.J."/>
            <person name="Nguyen M."/>
            <person name="Pham P.K."/>
            <person name="Cheuk R.F."/>
            <person name="Karlin-Newmann G."/>
            <person name="Liu S.X."/>
            <person name="Lam B."/>
            <person name="Sakano H."/>
            <person name="Wu T."/>
            <person name="Yu G."/>
            <person name="Miranda M."/>
            <person name="Quach H.L."/>
            <person name="Tripp M."/>
            <person name="Chang C.H."/>
            <person name="Lee J.M."/>
            <person name="Toriumi M.J."/>
            <person name="Chan M.M."/>
            <person name="Tang C.C."/>
            <person name="Onodera C.S."/>
            <person name="Deng J.M."/>
            <person name="Akiyama K."/>
            <person name="Ansari Y."/>
            <person name="Arakawa T."/>
            <person name="Banh J."/>
            <person name="Banno F."/>
            <person name="Bowser L."/>
            <person name="Brooks S.Y."/>
            <person name="Carninci P."/>
            <person name="Chao Q."/>
            <person name="Choy N."/>
            <person name="Enju A."/>
            <person name="Goldsmith A.D."/>
            <person name="Gurjal M."/>
            <person name="Hansen N.F."/>
            <person name="Hayashizaki Y."/>
            <person name="Johnson-Hopson C."/>
            <person name="Hsuan V.W."/>
            <person name="Iida K."/>
            <person name="Karnes M."/>
            <person name="Khan S."/>
            <person name="Koesema E."/>
            <person name="Ishida J."/>
            <person name="Jiang P.X."/>
            <person name="Jones T."/>
            <person name="Kawai J."/>
            <person name="Kamiya A."/>
            <person name="Meyers C."/>
            <person name="Nakajima M."/>
            <person name="Narusaka M."/>
            <person name="Seki M."/>
            <person name="Sakurai T."/>
            <person name="Satou M."/>
            <person name="Tamse R."/>
            <person name="Vaysberg M."/>
            <person name="Wallender E.K."/>
            <person name="Wong C."/>
            <person name="Yamamura Y."/>
            <person name="Yuan S."/>
            <person name="Shinozaki K."/>
            <person name="Davis R.W."/>
            <person name="Theologis A."/>
            <person name="Ecker J.R."/>
        </authorList>
    </citation>
    <scope>NUCLEOTIDE SEQUENCE [LARGE SCALE MRNA]</scope>
    <source>
        <strain>cv. Columbia</strain>
    </source>
</reference>
<reference key="4">
    <citation type="submission" date="2002-03" db="EMBL/GenBank/DDBJ databases">
        <title>Full-length cDNA from Arabidopsis thaliana.</title>
        <authorList>
            <person name="Brover V.V."/>
            <person name="Troukhan M.E."/>
            <person name="Alexandrov N.A."/>
            <person name="Lu Y.-P."/>
            <person name="Flavell R.B."/>
            <person name="Feldmann K.A."/>
        </authorList>
    </citation>
    <scope>NUCLEOTIDE SEQUENCE [LARGE SCALE MRNA]</scope>
</reference>
<reference key="5">
    <citation type="journal article" date="2001" name="Plant Mol. Biol.">
        <title>Molecular genetics of nucleotide sugar interconversion pathways in plants.</title>
        <authorList>
            <person name="Reiter W.-D."/>
            <person name="Vanzin G.F."/>
        </authorList>
    </citation>
    <scope>GENE FAMILY</scope>
</reference>
<reference key="6">
    <citation type="journal article" date="2002" name="Curr. Biol.">
        <title>Galactose biosynthesis in Arabidopsis: genetic evidence for substrate channeling from UDP-D-galactose into cell wall polymers.</title>
        <authorList>
            <person name="Seifert G.J."/>
            <person name="Barber C."/>
            <person name="Wells B."/>
            <person name="Dolan L."/>
            <person name="Roberts K."/>
        </authorList>
    </citation>
    <scope>GENE FAMILY</scope>
    <scope>TISSUE SPECIFICITY</scope>
</reference>
<reference key="7">
    <citation type="journal article" date="2006" name="J. Biol. Chem.">
        <title>Distinct properties of the five UDP-D-glucose/UDP-D-galactose 4-epimerase isoforms of Arabidopsis thaliana.</title>
        <authorList>
            <person name="Barber C."/>
            <person name="Roesti J."/>
            <person name="Rawat A."/>
            <person name="Findlay K."/>
            <person name="Roberts K."/>
            <person name="Seifert G.J."/>
        </authorList>
    </citation>
    <scope>FUNCTION</scope>
    <scope>SUBUNIT</scope>
    <scope>CATALYTIC ACTIVITY</scope>
    <scope>COFACTOR</scope>
    <scope>BIOPHYSICOCHEMICAL PROPERTIES</scope>
    <scope>ACTIVITY REGULATION</scope>
    <scope>TISSUE SPECIFICITY</scope>
</reference>
<reference key="8">
    <citation type="journal article" date="2007" name="Plant Cell">
        <title>UDP-glucose 4-epimerase isoforms UGE2 and UGE4 cooperate in providing UDP-galactose for cell wall biosynthesis and growth of Arabidopsis thaliana.</title>
        <authorList>
            <person name="Roesti J."/>
            <person name="Barton C.J."/>
            <person name="Albrecht S."/>
            <person name="Dupree P."/>
            <person name="Pauly M."/>
            <person name="Findlay K."/>
            <person name="Roberts K."/>
            <person name="Seifert G.J."/>
        </authorList>
    </citation>
    <scope>TISSUE SPECIFICITY</scope>
    <scope>DISRUPTION PHENOTYPE</scope>
</reference>
<reference key="9">
    <citation type="journal article" date="2009" name="Biochem. J.">
        <title>Bifunctional cytosolic UDP-glucose 4-epimerases catalyse the interconversion between UDP-D-xylose and UDP-L-arabinose in plants.</title>
        <authorList>
            <person name="Kotake T."/>
            <person name="Takata R."/>
            <person name="Verma R."/>
            <person name="Takaba M."/>
            <person name="Yamaguchi D."/>
            <person name="Orita T."/>
            <person name="Kaneko S."/>
            <person name="Matsuoka K."/>
            <person name="Koyama T."/>
            <person name="Reiter W.D."/>
            <person name="Tsumuraya Y."/>
        </authorList>
    </citation>
    <scope>FUNCTION</scope>
    <scope>CATALYTIC ACTIVITY</scope>
    <scope>COFACTOR</scope>
    <scope>BIOPHYSICOCHEMICAL PROPERTIES</scope>
</reference>
<gene>
    <name evidence="6" type="primary">UGE5</name>
    <name evidence="9" type="ordered locus">At4g10960</name>
    <name evidence="11" type="ORF">F25I24.170</name>
    <name evidence="10" type="ORF">F8M12.10</name>
</gene>
<keyword id="KW-0119">Carbohydrate metabolism</keyword>
<keyword id="KW-0299">Galactose metabolism</keyword>
<keyword id="KW-0413">Isomerase</keyword>
<keyword id="KW-0520">NAD</keyword>
<keyword id="KW-1185">Reference proteome</keyword>
<feature type="chain" id="PRO_0000183194" description="UDP-glucose 4-epimerase 5">
    <location>
        <begin position="1"/>
        <end position="351"/>
    </location>
</feature>
<feature type="active site" description="Proton acceptor" evidence="1">
    <location>
        <position position="154"/>
    </location>
</feature>
<feature type="binding site" evidence="1">
    <location>
        <begin position="13"/>
        <end position="15"/>
    </location>
    <ligand>
        <name>NAD(+)</name>
        <dbReference type="ChEBI" id="CHEBI:57540"/>
    </ligand>
</feature>
<feature type="binding site" evidence="1">
    <location>
        <begin position="34"/>
        <end position="38"/>
    </location>
    <ligand>
        <name>NAD(+)</name>
        <dbReference type="ChEBI" id="CHEBI:57540"/>
    </ligand>
</feature>
<feature type="binding site" evidence="1">
    <location>
        <begin position="64"/>
        <end position="65"/>
    </location>
    <ligand>
        <name>NAD(+)</name>
        <dbReference type="ChEBI" id="CHEBI:57540"/>
    </ligand>
</feature>
<feature type="binding site" evidence="1">
    <location>
        <position position="86"/>
    </location>
    <ligand>
        <name>NAD(+)</name>
        <dbReference type="ChEBI" id="CHEBI:57540"/>
    </ligand>
</feature>
<feature type="binding site" evidence="1">
    <location>
        <position position="90"/>
    </location>
    <ligand>
        <name>NAD(+)</name>
        <dbReference type="ChEBI" id="CHEBI:57540"/>
    </ligand>
</feature>
<feature type="binding site" evidence="1">
    <location>
        <begin position="130"/>
        <end position="132"/>
    </location>
    <ligand>
        <name>substrate</name>
    </ligand>
</feature>
<feature type="binding site" evidence="1">
    <location>
        <position position="158"/>
    </location>
    <ligand>
        <name>NAD(+)</name>
        <dbReference type="ChEBI" id="CHEBI:57540"/>
    </ligand>
</feature>
<feature type="binding site" evidence="1">
    <location>
        <begin position="182"/>
        <end position="184"/>
    </location>
    <ligand>
        <name>substrate</name>
    </ligand>
</feature>
<feature type="binding site" evidence="1">
    <location>
        <position position="182"/>
    </location>
    <ligand>
        <name>NAD(+)</name>
        <dbReference type="ChEBI" id="CHEBI:57540"/>
    </ligand>
</feature>
<feature type="binding site" evidence="1">
    <location>
        <begin position="203"/>
        <end position="205"/>
    </location>
    <ligand>
        <name>substrate</name>
    </ligand>
</feature>
<feature type="binding site" evidence="1">
    <location>
        <begin position="221"/>
        <end position="223"/>
    </location>
    <ligand>
        <name>substrate</name>
    </ligand>
</feature>
<feature type="binding site" evidence="1">
    <location>
        <position position="236"/>
    </location>
    <ligand>
        <name>substrate</name>
    </ligand>
</feature>
<feature type="binding site" evidence="1">
    <location>
        <begin position="298"/>
        <end position="301"/>
    </location>
    <ligand>
        <name>substrate</name>
    </ligand>
</feature>
<feature type="sequence conflict" description="In Ref. 4; AAM62752." evidence="8" ref="4">
    <location>
        <begin position="344"/>
        <end position="345"/>
    </location>
</feature>
<organism>
    <name type="scientific">Arabidopsis thaliana</name>
    <name type="common">Mouse-ear cress</name>
    <dbReference type="NCBI Taxonomy" id="3702"/>
    <lineage>
        <taxon>Eukaryota</taxon>
        <taxon>Viridiplantae</taxon>
        <taxon>Streptophyta</taxon>
        <taxon>Embryophyta</taxon>
        <taxon>Tracheophyta</taxon>
        <taxon>Spermatophyta</taxon>
        <taxon>Magnoliopsida</taxon>
        <taxon>eudicotyledons</taxon>
        <taxon>Gunneridae</taxon>
        <taxon>Pentapetalae</taxon>
        <taxon>rosids</taxon>
        <taxon>malvids</taxon>
        <taxon>Brassicales</taxon>
        <taxon>Brassicaceae</taxon>
        <taxon>Camelineae</taxon>
        <taxon>Arabidopsis</taxon>
    </lineage>
</organism>
<protein>
    <recommendedName>
        <fullName evidence="6">UDP-glucose 4-epimerase 5</fullName>
        <shortName evidence="6">AtUGE5</shortName>
        <ecNumber evidence="3 5">5.1.3.2</ecNumber>
    </recommendedName>
    <alternativeName>
        <fullName evidence="7">UDP-galactose 4-epimerase 5</fullName>
    </alternativeName>
</protein>